<name>IF1_STAHJ</name>
<accession>Q4L892</accession>
<sequence>MAKQDVIELEGTVLDTLPNAMFKVELENGHEILAHVSGKIRMNYIRILPGDKVTVEMSPYDLSRGRITYRYK</sequence>
<feature type="chain" id="PRO_0000263879" description="Translation initiation factor IF-1">
    <location>
        <begin position="1"/>
        <end position="72"/>
    </location>
</feature>
<feature type="domain" description="S1-like" evidence="1">
    <location>
        <begin position="1"/>
        <end position="72"/>
    </location>
</feature>
<dbReference type="EMBL" id="AP006716">
    <property type="protein sequence ID" value="BAE04133.1"/>
    <property type="molecule type" value="Genomic_DNA"/>
</dbReference>
<dbReference type="RefSeq" id="WP_001829792.1">
    <property type="nucleotide sequence ID" value="NC_007168.1"/>
</dbReference>
<dbReference type="SMR" id="Q4L892"/>
<dbReference type="GeneID" id="93780213"/>
<dbReference type="KEGG" id="sha:SH0824"/>
<dbReference type="eggNOG" id="COG0361">
    <property type="taxonomic scope" value="Bacteria"/>
</dbReference>
<dbReference type="HOGENOM" id="CLU_151267_1_0_9"/>
<dbReference type="OrthoDB" id="9803250at2"/>
<dbReference type="Proteomes" id="UP000000543">
    <property type="component" value="Chromosome"/>
</dbReference>
<dbReference type="GO" id="GO:0005829">
    <property type="term" value="C:cytosol"/>
    <property type="evidence" value="ECO:0007669"/>
    <property type="project" value="TreeGrafter"/>
</dbReference>
<dbReference type="GO" id="GO:0043022">
    <property type="term" value="F:ribosome binding"/>
    <property type="evidence" value="ECO:0007669"/>
    <property type="project" value="UniProtKB-UniRule"/>
</dbReference>
<dbReference type="GO" id="GO:0019843">
    <property type="term" value="F:rRNA binding"/>
    <property type="evidence" value="ECO:0007669"/>
    <property type="project" value="UniProtKB-UniRule"/>
</dbReference>
<dbReference type="GO" id="GO:0003743">
    <property type="term" value="F:translation initiation factor activity"/>
    <property type="evidence" value="ECO:0007669"/>
    <property type="project" value="UniProtKB-UniRule"/>
</dbReference>
<dbReference type="CDD" id="cd04451">
    <property type="entry name" value="S1_IF1"/>
    <property type="match status" value="1"/>
</dbReference>
<dbReference type="FunFam" id="2.40.50.140:FF:000002">
    <property type="entry name" value="Translation initiation factor IF-1"/>
    <property type="match status" value="1"/>
</dbReference>
<dbReference type="Gene3D" id="2.40.50.140">
    <property type="entry name" value="Nucleic acid-binding proteins"/>
    <property type="match status" value="1"/>
</dbReference>
<dbReference type="HAMAP" id="MF_00075">
    <property type="entry name" value="IF_1"/>
    <property type="match status" value="1"/>
</dbReference>
<dbReference type="InterPro" id="IPR012340">
    <property type="entry name" value="NA-bd_OB-fold"/>
</dbReference>
<dbReference type="InterPro" id="IPR006196">
    <property type="entry name" value="RNA-binding_domain_S1_IF1"/>
</dbReference>
<dbReference type="InterPro" id="IPR003029">
    <property type="entry name" value="S1_domain"/>
</dbReference>
<dbReference type="InterPro" id="IPR004368">
    <property type="entry name" value="TIF_IF1"/>
</dbReference>
<dbReference type="NCBIfam" id="TIGR00008">
    <property type="entry name" value="infA"/>
    <property type="match status" value="1"/>
</dbReference>
<dbReference type="PANTHER" id="PTHR33370">
    <property type="entry name" value="TRANSLATION INITIATION FACTOR IF-1, CHLOROPLASTIC"/>
    <property type="match status" value="1"/>
</dbReference>
<dbReference type="PANTHER" id="PTHR33370:SF1">
    <property type="entry name" value="TRANSLATION INITIATION FACTOR IF-1, CHLOROPLASTIC"/>
    <property type="match status" value="1"/>
</dbReference>
<dbReference type="Pfam" id="PF01176">
    <property type="entry name" value="eIF-1a"/>
    <property type="match status" value="1"/>
</dbReference>
<dbReference type="SMART" id="SM00316">
    <property type="entry name" value="S1"/>
    <property type="match status" value="1"/>
</dbReference>
<dbReference type="SUPFAM" id="SSF50249">
    <property type="entry name" value="Nucleic acid-binding proteins"/>
    <property type="match status" value="1"/>
</dbReference>
<dbReference type="PROSITE" id="PS50832">
    <property type="entry name" value="S1_IF1_TYPE"/>
    <property type="match status" value="1"/>
</dbReference>
<proteinExistence type="inferred from homology"/>
<organism>
    <name type="scientific">Staphylococcus haemolyticus (strain JCSC1435)</name>
    <dbReference type="NCBI Taxonomy" id="279808"/>
    <lineage>
        <taxon>Bacteria</taxon>
        <taxon>Bacillati</taxon>
        <taxon>Bacillota</taxon>
        <taxon>Bacilli</taxon>
        <taxon>Bacillales</taxon>
        <taxon>Staphylococcaceae</taxon>
        <taxon>Staphylococcus</taxon>
    </lineage>
</organism>
<reference key="1">
    <citation type="journal article" date="2005" name="J. Bacteriol.">
        <title>Whole-genome sequencing of Staphylococcus haemolyticus uncovers the extreme plasticity of its genome and the evolution of human-colonizing staphylococcal species.</title>
        <authorList>
            <person name="Takeuchi F."/>
            <person name="Watanabe S."/>
            <person name="Baba T."/>
            <person name="Yuzawa H."/>
            <person name="Ito T."/>
            <person name="Morimoto Y."/>
            <person name="Kuroda M."/>
            <person name="Cui L."/>
            <person name="Takahashi M."/>
            <person name="Ankai A."/>
            <person name="Baba S."/>
            <person name="Fukui S."/>
            <person name="Lee J.C."/>
            <person name="Hiramatsu K."/>
        </authorList>
    </citation>
    <scope>NUCLEOTIDE SEQUENCE [LARGE SCALE GENOMIC DNA]</scope>
    <source>
        <strain>JCSC1435</strain>
    </source>
</reference>
<gene>
    <name evidence="1" type="primary">infA</name>
    <name type="ordered locus">SH0824</name>
</gene>
<protein>
    <recommendedName>
        <fullName evidence="1">Translation initiation factor IF-1</fullName>
    </recommendedName>
</protein>
<comment type="function">
    <text evidence="1">One of the essential components for the initiation of protein synthesis. Stabilizes the binding of IF-2 and IF-3 on the 30S subunit to which N-formylmethionyl-tRNA(fMet) subsequently binds. Helps modulate mRNA selection, yielding the 30S pre-initiation complex (PIC). Upon addition of the 50S ribosomal subunit IF-1, IF-2 and IF-3 are released leaving the mature 70S translation initiation complex.</text>
</comment>
<comment type="subunit">
    <text evidence="1">Component of the 30S ribosomal translation pre-initiation complex which assembles on the 30S ribosome in the order IF-2 and IF-3, IF-1 and N-formylmethionyl-tRNA(fMet); mRNA recruitment can occur at any time during PIC assembly.</text>
</comment>
<comment type="subcellular location">
    <subcellularLocation>
        <location evidence="1">Cytoplasm</location>
    </subcellularLocation>
</comment>
<comment type="similarity">
    <text evidence="1">Belongs to the IF-1 family.</text>
</comment>
<evidence type="ECO:0000255" key="1">
    <source>
        <dbReference type="HAMAP-Rule" id="MF_00075"/>
    </source>
</evidence>
<keyword id="KW-0963">Cytoplasm</keyword>
<keyword id="KW-0396">Initiation factor</keyword>
<keyword id="KW-0648">Protein biosynthesis</keyword>
<keyword id="KW-0694">RNA-binding</keyword>
<keyword id="KW-0699">rRNA-binding</keyword>